<dbReference type="EMBL" id="X17234">
    <property type="protein sequence ID" value="CAA35103.1"/>
    <property type="molecule type" value="Genomic_DNA"/>
</dbReference>
<dbReference type="PIR" id="S11682">
    <property type="entry name" value="RKDWSB"/>
</dbReference>
<dbReference type="SMR" id="P19310"/>
<dbReference type="GO" id="GO:0009507">
    <property type="term" value="C:chloroplast"/>
    <property type="evidence" value="ECO:0007669"/>
    <property type="project" value="UniProtKB-SubCell"/>
</dbReference>
<dbReference type="GO" id="GO:0016984">
    <property type="term" value="F:ribulose-bisphosphate carboxylase activity"/>
    <property type="evidence" value="ECO:0007669"/>
    <property type="project" value="UniProtKB-UniRule"/>
</dbReference>
<dbReference type="GO" id="GO:0009853">
    <property type="term" value="P:photorespiration"/>
    <property type="evidence" value="ECO:0007669"/>
    <property type="project" value="UniProtKB-KW"/>
</dbReference>
<dbReference type="GO" id="GO:0019253">
    <property type="term" value="P:reductive pentose-phosphate cycle"/>
    <property type="evidence" value="ECO:0007669"/>
    <property type="project" value="UniProtKB-UniRule"/>
</dbReference>
<dbReference type="CDD" id="cd03527">
    <property type="entry name" value="RuBisCO_small"/>
    <property type="match status" value="1"/>
</dbReference>
<dbReference type="FunFam" id="3.30.190.10:FF:000001">
    <property type="entry name" value="Ribulose bisphosphate carboxylase small chain, chloroplastic"/>
    <property type="match status" value="1"/>
</dbReference>
<dbReference type="Gene3D" id="3.30.190.10">
    <property type="entry name" value="Ribulose bisphosphate carboxylase, small subunit"/>
    <property type="match status" value="1"/>
</dbReference>
<dbReference type="HAMAP" id="MF_00859">
    <property type="entry name" value="RuBisCO_S_bact"/>
    <property type="match status" value="1"/>
</dbReference>
<dbReference type="InterPro" id="IPR024681">
    <property type="entry name" value="RuBisCO_ssu"/>
</dbReference>
<dbReference type="InterPro" id="IPR000894">
    <property type="entry name" value="RuBisCO_ssu_dom"/>
</dbReference>
<dbReference type="InterPro" id="IPR024680">
    <property type="entry name" value="RuBisCO_ssu_N"/>
</dbReference>
<dbReference type="InterPro" id="IPR036385">
    <property type="entry name" value="RuBisCO_ssu_sf"/>
</dbReference>
<dbReference type="PANTHER" id="PTHR31262">
    <property type="entry name" value="RIBULOSE BISPHOSPHATE CARBOXYLASE SMALL CHAIN 1, CHLOROPLASTIC"/>
    <property type="match status" value="1"/>
</dbReference>
<dbReference type="PANTHER" id="PTHR31262:SF10">
    <property type="entry name" value="RIBULOSE BISPHOSPHATE CARBOXYLASE SMALL SUBUNIT 1A, CHLOROPLASTIC-RELATED"/>
    <property type="match status" value="1"/>
</dbReference>
<dbReference type="Pfam" id="PF12338">
    <property type="entry name" value="RbcS"/>
    <property type="match status" value="1"/>
</dbReference>
<dbReference type="Pfam" id="PF00101">
    <property type="entry name" value="RuBisCO_small"/>
    <property type="match status" value="1"/>
</dbReference>
<dbReference type="PRINTS" id="PR00152">
    <property type="entry name" value="RUBISCOSMALL"/>
</dbReference>
<dbReference type="SMART" id="SM00961">
    <property type="entry name" value="RuBisCO_small"/>
    <property type="match status" value="1"/>
</dbReference>
<dbReference type="SUPFAM" id="SSF55239">
    <property type="entry name" value="RuBisCO, small subunit"/>
    <property type="match status" value="1"/>
</dbReference>
<sequence length="177" mass="19874">MASSMMASTAAAVARAGPAQTNMVPFNACRSSVPFPATRKANNDLSTLPSNGGRVSCMQVWPPEGLKKFETLSYLPPLSVEDLAKEVDYLLRNDWVPCIEFSKEGFVYRENHASPGYYDGRYWTMWKLPMFGCTDASQVIAEVEEAKKAYPEYFVRIIGFDNKRQVQCISFIAYKPT</sequence>
<reference key="1">
    <citation type="journal article" date="1990" name="Plant Mol. Biol.">
        <title>Differential expression of individual genes encoding the small subunit of ribulose-1,5-bisphosphate carboxylase in Lemna gibba.</title>
        <authorList>
            <person name="Silverthorne J."/>
            <person name="Wimpee C.F."/>
            <person name="Yamada T."/>
            <person name="Rolfe S.A."/>
            <person name="Tobin E.M."/>
        </authorList>
    </citation>
    <scope>NUCLEOTIDE SEQUENCE [GENOMIC DNA]</scope>
    <scope>INDUCTION</scope>
</reference>
<accession>P19310</accession>
<gene>
    <name evidence="1" type="primary">RBCS4</name>
    <name evidence="3" type="synonym">SSU40B</name>
</gene>
<proteinExistence type="evidence at transcript level"/>
<evidence type="ECO:0000255" key="1">
    <source>
        <dbReference type="HAMAP-Rule" id="MF_00860"/>
    </source>
</evidence>
<evidence type="ECO:0000269" key="2">
    <source>
    </source>
</evidence>
<evidence type="ECO:0000303" key="3">
    <source>
    </source>
</evidence>
<name>RBS4_LEMGI</name>
<comment type="function">
    <text evidence="1">RuBisCO catalyzes two reactions: the carboxylation of D-ribulose 1,5-bisphosphate, the primary event in carbon dioxide fixation, as well as the oxidative fragmentation of the pentose substrate. Both reactions occur simultaneously and in competition at the same active site. Although the small subunit is not catalytic it is essential for maximal activity.</text>
</comment>
<comment type="subunit">
    <text evidence="1">Heterohexadecamer of 8 large and 8 small subunits.</text>
</comment>
<comment type="subcellular location">
    <subcellularLocation>
        <location evidence="1">Plastid</location>
        <location evidence="1">Chloroplast</location>
    </subcellularLocation>
</comment>
<comment type="induction">
    <text evidence="2">Accumulates to low levels when grown under continuous white light.</text>
</comment>
<comment type="miscellaneous">
    <text>This protein is coded by one member of a small multigene family.</text>
</comment>
<comment type="miscellaneous">
    <text evidence="1">The basic functional RuBisCO is composed of a large chain homodimer in a 'head-to-tail' conformation. In form I RuBisCO this homodimer is arranged in a barrel-like tetramer with the small subunits forming a tetrameric 'cap' on each end of the 'barrel'.</text>
</comment>
<comment type="similarity">
    <text evidence="1">Belongs to the RuBisCO small chain family.</text>
</comment>
<keyword id="KW-0113">Calvin cycle</keyword>
<keyword id="KW-0120">Carbon dioxide fixation</keyword>
<keyword id="KW-0150">Chloroplast</keyword>
<keyword id="KW-0601">Photorespiration</keyword>
<keyword id="KW-0602">Photosynthesis</keyword>
<keyword id="KW-0934">Plastid</keyword>
<keyword id="KW-0809">Transit peptide</keyword>
<feature type="transit peptide" description="Chloroplast" evidence="1">
    <location>
        <begin position="1"/>
        <end position="56"/>
    </location>
</feature>
<feature type="chain" id="PRO_0000031515" description="Ribulose bisphosphate carboxylase small subunit, chloroplastic 4" evidence="1">
    <location>
        <begin position="57"/>
        <end position="177"/>
    </location>
</feature>
<organism>
    <name type="scientific">Lemna gibba</name>
    <name type="common">Swollen duckweed</name>
    <dbReference type="NCBI Taxonomy" id="4470"/>
    <lineage>
        <taxon>Eukaryota</taxon>
        <taxon>Viridiplantae</taxon>
        <taxon>Streptophyta</taxon>
        <taxon>Embryophyta</taxon>
        <taxon>Tracheophyta</taxon>
        <taxon>Spermatophyta</taxon>
        <taxon>Magnoliopsida</taxon>
        <taxon>Liliopsida</taxon>
        <taxon>Araceae</taxon>
        <taxon>Lemnoideae</taxon>
        <taxon>Lemna</taxon>
    </lineage>
</organism>
<protein>
    <recommendedName>
        <fullName evidence="1">Ribulose bisphosphate carboxylase small subunit, chloroplastic 4</fullName>
        <shortName evidence="1">RuBisCO small subunit 4</shortName>
        <shortName evidence="3">RuBisCO small subunit SSU40B</shortName>
    </recommendedName>
</protein>